<organism>
    <name type="scientific">Haemophilus influenzae (strain 86-028NP)</name>
    <dbReference type="NCBI Taxonomy" id="281310"/>
    <lineage>
        <taxon>Bacteria</taxon>
        <taxon>Pseudomonadati</taxon>
        <taxon>Pseudomonadota</taxon>
        <taxon>Gammaproteobacteria</taxon>
        <taxon>Pasteurellales</taxon>
        <taxon>Pasteurellaceae</taxon>
        <taxon>Haemophilus</taxon>
    </lineage>
</organism>
<comment type="similarity">
    <text evidence="1">Belongs to the UPF0250 family.</text>
</comment>
<feature type="chain" id="PRO_1000061869" description="UPF0250 protein NTHI0035">
    <location>
        <begin position="1"/>
        <end position="92"/>
    </location>
</feature>
<reference key="1">
    <citation type="journal article" date="2005" name="J. Bacteriol.">
        <title>Genomic sequence of an otitis media isolate of nontypeable Haemophilus influenzae: comparative study with H. influenzae serotype d, strain KW20.</title>
        <authorList>
            <person name="Harrison A."/>
            <person name="Dyer D.W."/>
            <person name="Gillaspy A."/>
            <person name="Ray W.C."/>
            <person name="Mungur R."/>
            <person name="Carson M.B."/>
            <person name="Zhong H."/>
            <person name="Gipson J."/>
            <person name="Gipson M."/>
            <person name="Johnson L.S."/>
            <person name="Lewis L."/>
            <person name="Bakaletz L.O."/>
            <person name="Munson R.S. Jr."/>
        </authorList>
    </citation>
    <scope>NUCLEOTIDE SEQUENCE [LARGE SCALE GENOMIC DNA]</scope>
    <source>
        <strain>86-028NP</strain>
    </source>
</reference>
<dbReference type="EMBL" id="CP000057">
    <property type="protein sequence ID" value="AAX87031.1"/>
    <property type="molecule type" value="Genomic_DNA"/>
</dbReference>
<dbReference type="SMR" id="Q4QPL6"/>
<dbReference type="KEGG" id="hit:NTHI0035"/>
<dbReference type="HOGENOM" id="CLU_161438_2_1_6"/>
<dbReference type="Proteomes" id="UP000002525">
    <property type="component" value="Chromosome"/>
</dbReference>
<dbReference type="GO" id="GO:0005829">
    <property type="term" value="C:cytosol"/>
    <property type="evidence" value="ECO:0007669"/>
    <property type="project" value="TreeGrafter"/>
</dbReference>
<dbReference type="Gene3D" id="3.30.70.260">
    <property type="match status" value="1"/>
</dbReference>
<dbReference type="HAMAP" id="MF_00659">
    <property type="entry name" value="UPF0250"/>
    <property type="match status" value="1"/>
</dbReference>
<dbReference type="InterPro" id="IPR007454">
    <property type="entry name" value="UPF0250_YbeD-like"/>
</dbReference>
<dbReference type="InterPro" id="IPR027471">
    <property type="entry name" value="YbeD-like_sf"/>
</dbReference>
<dbReference type="NCBIfam" id="NF003447">
    <property type="entry name" value="PRK04998.1"/>
    <property type="match status" value="1"/>
</dbReference>
<dbReference type="PANTHER" id="PTHR38036">
    <property type="entry name" value="UPF0250 PROTEIN YBED"/>
    <property type="match status" value="1"/>
</dbReference>
<dbReference type="PANTHER" id="PTHR38036:SF1">
    <property type="entry name" value="UPF0250 PROTEIN YBED"/>
    <property type="match status" value="1"/>
</dbReference>
<dbReference type="Pfam" id="PF04359">
    <property type="entry name" value="DUF493"/>
    <property type="match status" value="1"/>
</dbReference>
<dbReference type="SUPFAM" id="SSF117991">
    <property type="entry name" value="YbeD/HP0495-like"/>
    <property type="match status" value="1"/>
</dbReference>
<name>Y035_HAEI8</name>
<accession>Q4QPL6</accession>
<sequence>MTIENDYAKLKELMEFPAKMTFKVAGINREGLAQDLIQVVQKYIKGDYIPKEKRSSKGTYNSVSIDIIAENFDQVETLYKELAKVEGVKMVI</sequence>
<evidence type="ECO:0000255" key="1">
    <source>
        <dbReference type="HAMAP-Rule" id="MF_00659"/>
    </source>
</evidence>
<protein>
    <recommendedName>
        <fullName evidence="1">UPF0250 protein NTHI0035</fullName>
    </recommendedName>
</protein>
<gene>
    <name type="ordered locus">NTHI0035</name>
</gene>
<proteinExistence type="inferred from homology"/>